<gene>
    <name evidence="1" type="primary">sufE</name>
    <name type="ordered locus">SeD_A1968</name>
</gene>
<keyword id="KW-0963">Cytoplasm</keyword>
<feature type="chain" id="PRO_1000188331" description="Cysteine desulfuration protein SufE">
    <location>
        <begin position="1"/>
        <end position="138"/>
    </location>
</feature>
<feature type="active site" description="Cysteine persulfide intermediate" evidence="1">
    <location>
        <position position="51"/>
    </location>
</feature>
<comment type="function">
    <text evidence="1">Participates in cysteine desulfuration mediated by SufS. Cysteine desulfuration mobilizes sulfur from L-cysteine to yield L-alanine and constitutes an essential step in sulfur metabolism for biosynthesis of a variety of sulfur-containing biomolecules. Functions as a sulfur acceptor for SufS, by mediating the direct transfer of the sulfur atom from the S-sulfanylcysteine of SufS, an intermediate product of cysteine desulfuration process.</text>
</comment>
<comment type="pathway">
    <text evidence="1">Cofactor biosynthesis; iron-sulfur cluster biosynthesis.</text>
</comment>
<comment type="subunit">
    <text evidence="1">Homodimer. Interacts with SufS.</text>
</comment>
<comment type="subcellular location">
    <subcellularLocation>
        <location evidence="1">Cytoplasm</location>
    </subcellularLocation>
</comment>
<comment type="similarity">
    <text evidence="1">Belongs to the SufE family.</text>
</comment>
<protein>
    <recommendedName>
        <fullName evidence="1">Cysteine desulfuration protein SufE</fullName>
    </recommendedName>
</protein>
<evidence type="ECO:0000255" key="1">
    <source>
        <dbReference type="HAMAP-Rule" id="MF_01832"/>
    </source>
</evidence>
<accession>B5FIM2</accession>
<reference key="1">
    <citation type="journal article" date="2011" name="J. Bacteriol.">
        <title>Comparative genomics of 28 Salmonella enterica isolates: evidence for CRISPR-mediated adaptive sublineage evolution.</title>
        <authorList>
            <person name="Fricke W.F."/>
            <person name="Mammel M.K."/>
            <person name="McDermott P.F."/>
            <person name="Tartera C."/>
            <person name="White D.G."/>
            <person name="Leclerc J.E."/>
            <person name="Ravel J."/>
            <person name="Cebula T.A."/>
        </authorList>
    </citation>
    <scope>NUCLEOTIDE SEQUENCE [LARGE SCALE GENOMIC DNA]</scope>
    <source>
        <strain>CT_02021853</strain>
    </source>
</reference>
<name>SUFE_SALDC</name>
<organism>
    <name type="scientific">Salmonella dublin (strain CT_02021853)</name>
    <dbReference type="NCBI Taxonomy" id="439851"/>
    <lineage>
        <taxon>Bacteria</taxon>
        <taxon>Pseudomonadati</taxon>
        <taxon>Pseudomonadota</taxon>
        <taxon>Gammaproteobacteria</taxon>
        <taxon>Enterobacterales</taxon>
        <taxon>Enterobacteriaceae</taxon>
        <taxon>Salmonella</taxon>
    </lineage>
</organism>
<dbReference type="EMBL" id="CP001144">
    <property type="protein sequence ID" value="ACH74785.1"/>
    <property type="molecule type" value="Genomic_DNA"/>
</dbReference>
<dbReference type="RefSeq" id="WP_000729468.1">
    <property type="nucleotide sequence ID" value="NC_011205.1"/>
</dbReference>
<dbReference type="SMR" id="B5FIM2"/>
<dbReference type="KEGG" id="sed:SeD_A1968"/>
<dbReference type="HOGENOM" id="CLU_124502_1_1_6"/>
<dbReference type="UniPathway" id="UPA00266"/>
<dbReference type="Proteomes" id="UP000008322">
    <property type="component" value="Chromosome"/>
</dbReference>
<dbReference type="GO" id="GO:0005737">
    <property type="term" value="C:cytoplasm"/>
    <property type="evidence" value="ECO:0007669"/>
    <property type="project" value="UniProtKB-SubCell"/>
</dbReference>
<dbReference type="GO" id="GO:0016226">
    <property type="term" value="P:iron-sulfur cluster assembly"/>
    <property type="evidence" value="ECO:0007669"/>
    <property type="project" value="InterPro"/>
</dbReference>
<dbReference type="GO" id="GO:0006790">
    <property type="term" value="P:sulfur compound metabolic process"/>
    <property type="evidence" value="ECO:0007669"/>
    <property type="project" value="InterPro"/>
</dbReference>
<dbReference type="Gene3D" id="3.90.1010.10">
    <property type="match status" value="1"/>
</dbReference>
<dbReference type="HAMAP" id="MF_01832">
    <property type="entry name" value="SufE"/>
    <property type="match status" value="1"/>
</dbReference>
<dbReference type="InterPro" id="IPR023939">
    <property type="entry name" value="Cysteine_desulfuration_SufE"/>
</dbReference>
<dbReference type="InterPro" id="IPR003808">
    <property type="entry name" value="Fe-S_metab-assoc_dom"/>
</dbReference>
<dbReference type="NCBIfam" id="NF006792">
    <property type="entry name" value="PRK09296.1"/>
    <property type="match status" value="1"/>
</dbReference>
<dbReference type="PANTHER" id="PTHR43597:SF3">
    <property type="entry name" value="CYSTEINE DESULFURATION PROTEIN SUFE"/>
    <property type="match status" value="1"/>
</dbReference>
<dbReference type="PANTHER" id="PTHR43597">
    <property type="entry name" value="SULFUR ACCEPTOR PROTEIN CSDE"/>
    <property type="match status" value="1"/>
</dbReference>
<dbReference type="Pfam" id="PF02657">
    <property type="entry name" value="SufE"/>
    <property type="match status" value="1"/>
</dbReference>
<dbReference type="SUPFAM" id="SSF82649">
    <property type="entry name" value="SufE/NifU"/>
    <property type="match status" value="1"/>
</dbReference>
<sequence length="138" mass="15760">MAALPDKEKLLRNFTRCANWEEKYLYIIELGQRLAELNPQDRNPQNTIHGCQSQVWIVMRRNANGIIELQGDSDAAIVKGLMAVVFILYHQMTAQDIVHFDVRPWFEKMALAQHLTPSRSQGLEAMIRAIRAKAATLS</sequence>
<proteinExistence type="inferred from homology"/>